<dbReference type="EMBL" id="U77983">
    <property type="protein sequence ID" value="AAC49621.1"/>
    <property type="molecule type" value="Genomic_DNA"/>
</dbReference>
<dbReference type="EMBL" id="CU329670">
    <property type="protein sequence ID" value="CAB57442.1"/>
    <property type="molecule type" value="Genomic_DNA"/>
</dbReference>
<dbReference type="PIR" id="T41719">
    <property type="entry name" value="T41719"/>
</dbReference>
<dbReference type="RefSeq" id="NP_593161.1">
    <property type="nucleotide sequence ID" value="NM_001018559.2"/>
</dbReference>
<dbReference type="PDB" id="4AEZ">
    <property type="method" value="X-ray"/>
    <property type="resolution" value="2.30 A"/>
    <property type="chains" value="A/D/G=88-488"/>
</dbReference>
<dbReference type="PDBsum" id="4AEZ"/>
<dbReference type="SMR" id="P78972"/>
<dbReference type="BioGRID" id="279650">
    <property type="interactions" value="31"/>
</dbReference>
<dbReference type="ComplexPortal" id="CPX-3924">
    <property type="entry name" value="Mitotic Checkpoint Complex"/>
</dbReference>
<dbReference type="ComplexPortal" id="CPX-764">
    <property type="entry name" value="Anaphase-promoting complex, slp1 variant"/>
</dbReference>
<dbReference type="DIP" id="DIP-38036N"/>
<dbReference type="ELM" id="P78972"/>
<dbReference type="FunCoup" id="P78972">
    <property type="interactions" value="796"/>
</dbReference>
<dbReference type="IntAct" id="P78972">
    <property type="interactions" value="4"/>
</dbReference>
<dbReference type="STRING" id="284812.P78972"/>
<dbReference type="iPTMnet" id="P78972"/>
<dbReference type="PaxDb" id="4896-SPAC821.08c.1"/>
<dbReference type="EnsemblFungi" id="SPAC821.08c.1">
    <property type="protein sequence ID" value="SPAC821.08c.1:pep"/>
    <property type="gene ID" value="SPAC821.08c"/>
</dbReference>
<dbReference type="GeneID" id="2543222"/>
<dbReference type="KEGG" id="spo:2543222"/>
<dbReference type="PomBase" id="SPAC821.08c">
    <property type="gene designation" value="slp1"/>
</dbReference>
<dbReference type="VEuPathDB" id="FungiDB:SPAC821.08c"/>
<dbReference type="eggNOG" id="KOG0305">
    <property type="taxonomic scope" value="Eukaryota"/>
</dbReference>
<dbReference type="HOGENOM" id="CLU_014831_6_0_1"/>
<dbReference type="InParanoid" id="P78972"/>
<dbReference type="OMA" id="CSGACLN"/>
<dbReference type="PhylomeDB" id="P78972"/>
<dbReference type="Reactome" id="R-SPO-141405">
    <property type="pathway name" value="Inhibition of the proteolytic activity of APC/C required for the onset of anaphase by mitotic spindle checkpoint components"/>
</dbReference>
<dbReference type="Reactome" id="R-SPO-141430">
    <property type="pathway name" value="Inactivation of APC/C via direct inhibition of the APC/C complex"/>
</dbReference>
<dbReference type="Reactome" id="R-SPO-983168">
    <property type="pathway name" value="Antigen processing: Ubiquitination &amp; Proteasome degradation"/>
</dbReference>
<dbReference type="EvolutionaryTrace" id="P78972"/>
<dbReference type="PRO" id="PR:P78972"/>
<dbReference type="Proteomes" id="UP000002485">
    <property type="component" value="Chromosome I"/>
</dbReference>
<dbReference type="GO" id="GO:0005680">
    <property type="term" value="C:anaphase-promoting complex"/>
    <property type="evidence" value="ECO:0000318"/>
    <property type="project" value="GO_Central"/>
</dbReference>
<dbReference type="GO" id="GO:0032153">
    <property type="term" value="C:cell division site"/>
    <property type="evidence" value="ECO:0007005"/>
    <property type="project" value="PomBase"/>
</dbReference>
<dbReference type="GO" id="GO:0000776">
    <property type="term" value="C:kinetochore"/>
    <property type="evidence" value="ECO:0000304"/>
    <property type="project" value="PomBase"/>
</dbReference>
<dbReference type="GO" id="GO:0033597">
    <property type="term" value="C:mitotic checkpoint complex"/>
    <property type="evidence" value="ECO:0000314"/>
    <property type="project" value="PomBase"/>
</dbReference>
<dbReference type="GO" id="GO:0072686">
    <property type="term" value="C:mitotic spindle"/>
    <property type="evidence" value="ECO:0007005"/>
    <property type="project" value="PomBase"/>
</dbReference>
<dbReference type="GO" id="GO:0044732">
    <property type="term" value="C:mitotic spindle pole body"/>
    <property type="evidence" value="ECO:0007005"/>
    <property type="project" value="PomBase"/>
</dbReference>
<dbReference type="GO" id="GO:0005634">
    <property type="term" value="C:nucleus"/>
    <property type="evidence" value="ECO:0007005"/>
    <property type="project" value="PomBase"/>
</dbReference>
<dbReference type="GO" id="GO:0010997">
    <property type="term" value="F:anaphase-promoting complex binding"/>
    <property type="evidence" value="ECO:0000353"/>
    <property type="project" value="PomBase"/>
</dbReference>
<dbReference type="GO" id="GO:1990757">
    <property type="term" value="F:ubiquitin ligase activator activity"/>
    <property type="evidence" value="ECO:0000314"/>
    <property type="project" value="PomBase"/>
</dbReference>
<dbReference type="GO" id="GO:0031145">
    <property type="term" value="P:anaphase-promoting complex-dependent catabolic process"/>
    <property type="evidence" value="ECO:0000314"/>
    <property type="project" value="PomBase"/>
</dbReference>
<dbReference type="GO" id="GO:0051301">
    <property type="term" value="P:cell division"/>
    <property type="evidence" value="ECO:0007669"/>
    <property type="project" value="UniProtKB-KW"/>
</dbReference>
<dbReference type="GO" id="GO:1990949">
    <property type="term" value="P:metaphase/anaphase transition of meiosis I"/>
    <property type="evidence" value="ECO:0000269"/>
    <property type="project" value="PomBase"/>
</dbReference>
<dbReference type="GO" id="GO:1990950">
    <property type="term" value="P:metaphase/anaphase transition of meiosis II"/>
    <property type="evidence" value="ECO:0000269"/>
    <property type="project" value="PomBase"/>
</dbReference>
<dbReference type="GO" id="GO:0007094">
    <property type="term" value="P:mitotic spindle assembly checkpoint signaling"/>
    <property type="evidence" value="ECO:0000303"/>
    <property type="project" value="ComplexPortal"/>
</dbReference>
<dbReference type="GO" id="GO:1905786">
    <property type="term" value="P:positive regulation of anaphase-promoting complex-dependent catabolic process"/>
    <property type="evidence" value="ECO:0000318"/>
    <property type="project" value="GO_Central"/>
</dbReference>
<dbReference type="GO" id="GO:0045842">
    <property type="term" value="P:positive regulation of mitotic metaphase/anaphase transition"/>
    <property type="evidence" value="ECO:0000303"/>
    <property type="project" value="PomBase"/>
</dbReference>
<dbReference type="FunFam" id="2.130.10.10:FF:000098">
    <property type="entry name" value="WD repeat-containing protein slp1"/>
    <property type="match status" value="1"/>
</dbReference>
<dbReference type="Gene3D" id="2.130.10.10">
    <property type="entry name" value="YVTN repeat-like/Quinoprotein amine dehydrogenase"/>
    <property type="match status" value="1"/>
</dbReference>
<dbReference type="InterPro" id="IPR033010">
    <property type="entry name" value="Cdc20/Fizzy"/>
</dbReference>
<dbReference type="InterPro" id="IPR015943">
    <property type="entry name" value="WD40/YVTN_repeat-like_dom_sf"/>
</dbReference>
<dbReference type="InterPro" id="IPR056150">
    <property type="entry name" value="WD40_CDC20-Fz"/>
</dbReference>
<dbReference type="InterPro" id="IPR019775">
    <property type="entry name" value="WD40_repeat_CS"/>
</dbReference>
<dbReference type="InterPro" id="IPR036322">
    <property type="entry name" value="WD40_repeat_dom_sf"/>
</dbReference>
<dbReference type="InterPro" id="IPR001680">
    <property type="entry name" value="WD40_rpt"/>
</dbReference>
<dbReference type="PANTHER" id="PTHR19918">
    <property type="entry name" value="CELL DIVISION CYCLE 20 CDC20 FIZZY -RELATED"/>
    <property type="match status" value="1"/>
</dbReference>
<dbReference type="PANTHER" id="PTHR19918:SF8">
    <property type="entry name" value="FI02843P"/>
    <property type="match status" value="1"/>
</dbReference>
<dbReference type="Pfam" id="PF24807">
    <property type="entry name" value="WD40_CDC20-Fz"/>
    <property type="match status" value="1"/>
</dbReference>
<dbReference type="SMART" id="SM00320">
    <property type="entry name" value="WD40"/>
    <property type="match status" value="6"/>
</dbReference>
<dbReference type="SUPFAM" id="SSF50978">
    <property type="entry name" value="WD40 repeat-like"/>
    <property type="match status" value="1"/>
</dbReference>
<dbReference type="PROSITE" id="PS00678">
    <property type="entry name" value="WD_REPEATS_1"/>
    <property type="match status" value="2"/>
</dbReference>
<dbReference type="PROSITE" id="PS50082">
    <property type="entry name" value="WD_REPEATS_2"/>
    <property type="match status" value="2"/>
</dbReference>
<dbReference type="PROSITE" id="PS50294">
    <property type="entry name" value="WD_REPEATS_REGION"/>
    <property type="match status" value="1"/>
</dbReference>
<comment type="function">
    <text evidence="3 4 5">Required for mad2-dependent spindle checkpoint activation. Promotes ubiquitin-dependent degradation of cdc13 by the anaphase promoting complex/cyclosome (APC/C).</text>
</comment>
<comment type="subunit">
    <text evidence="2 3">Interacts with cdc13, mad3 and mes1.</text>
</comment>
<comment type="interaction">
    <interactant intactId="EBI-1252744">
        <id>P78972</id>
    </interactant>
    <interactant intactId="EBI-1269310">
        <id>O14417</id>
        <label>mad2</label>
    </interactant>
    <organismsDiffer>false</organismsDiffer>
    <experiments>8</experiments>
</comment>
<comment type="interaction">
    <interactant intactId="EBI-1252744">
        <id>P78972</id>
    </interactant>
    <interactant intactId="EBI-1553555">
        <id>P41005</id>
        <label>mes1</label>
    </interactant>
    <organismsDiffer>false</organismsDiffer>
    <experiments>2</experiments>
</comment>
<comment type="similarity">
    <text evidence="6">Belongs to the WD repeat CDC20/Fizzy family.</text>
</comment>
<organism>
    <name type="scientific">Schizosaccharomyces pombe (strain 972 / ATCC 24843)</name>
    <name type="common">Fission yeast</name>
    <dbReference type="NCBI Taxonomy" id="284812"/>
    <lineage>
        <taxon>Eukaryota</taxon>
        <taxon>Fungi</taxon>
        <taxon>Dikarya</taxon>
        <taxon>Ascomycota</taxon>
        <taxon>Taphrinomycotina</taxon>
        <taxon>Schizosaccharomycetes</taxon>
        <taxon>Schizosaccharomycetales</taxon>
        <taxon>Schizosaccharomycetaceae</taxon>
        <taxon>Schizosaccharomyces</taxon>
    </lineage>
</organism>
<proteinExistence type="evidence at protein level"/>
<keyword id="KW-0002">3D-structure</keyword>
<keyword id="KW-0131">Cell cycle</keyword>
<keyword id="KW-0132">Cell division</keyword>
<keyword id="KW-0498">Mitosis</keyword>
<keyword id="KW-1185">Reference proteome</keyword>
<keyword id="KW-0677">Repeat</keyword>
<keyword id="KW-0853">WD repeat</keyword>
<accession>P78972</accession>
<sequence>MEIAGNSSTISPTFSTPTKKRNLVFPNSPITPLHQQALLGRNGRSSKRCSPKSSFIRNSPKIDVVNTDWSIPLCGSPRNKSRPASRSDRFIPSRPNTANAFVNSISSDVPFDYSESVAEACGFDLNTRVLAFKLDAPEAKKPVDLRTQHNRPQRPVVTPAKRRFNTTPERVLDAPGIIDDYYLNLLDWSNLNVVAVALERNVYVWNADSGSVSALAETDESTYVASVKWSHDGSFLSVGLGNGLVDIYDVESQTKLRTMAGHQARVGCLSWNRHVLSSGSRSGAIHHHDVRIANHQIGTLQGHSSEVCGLAWRSDGLQLASGGNDNVVQIWDARSSIPKFTKTNHNAAVKAVAWCPWQSNLLATGGGTMDKQIHFWNAATGARVNTVDAGSQVTSLIWSPHSKEIMSTHGFPDNNLSIWSYSSSGLTKQVDIPAHDTRVLYSALSPDGRILSTAASDENLKFWRVYDGDHVKRPIPITKTPSSSITIR</sequence>
<evidence type="ECO:0000256" key="1">
    <source>
        <dbReference type="SAM" id="MobiDB-lite"/>
    </source>
</evidence>
<evidence type="ECO:0000269" key="2">
    <source>
    </source>
</evidence>
<evidence type="ECO:0000269" key="3">
    <source>
    </source>
</evidence>
<evidence type="ECO:0000269" key="4">
    <source>
    </source>
</evidence>
<evidence type="ECO:0000269" key="5">
    <source>
    </source>
</evidence>
<evidence type="ECO:0000305" key="6"/>
<evidence type="ECO:0007829" key="7">
    <source>
        <dbReference type="PDB" id="4AEZ"/>
    </source>
</evidence>
<feature type="chain" id="PRO_0000051220" description="WD repeat-containing protein slp1">
    <location>
        <begin position="1"/>
        <end position="488"/>
    </location>
</feature>
<feature type="repeat" description="WD 1">
    <location>
        <begin position="178"/>
        <end position="215"/>
    </location>
</feature>
<feature type="repeat" description="WD 2">
    <location>
        <begin position="219"/>
        <end position="258"/>
    </location>
</feature>
<feature type="repeat" description="WD 3">
    <location>
        <begin position="261"/>
        <end position="298"/>
    </location>
</feature>
<feature type="repeat" description="WD 4">
    <location>
        <begin position="302"/>
        <end position="341"/>
    </location>
</feature>
<feature type="repeat" description="WD 5">
    <location>
        <begin position="344"/>
        <end position="386"/>
    </location>
</feature>
<feature type="repeat" description="WD 6">
    <location>
        <begin position="388"/>
        <end position="429"/>
    </location>
</feature>
<feature type="repeat" description="WD 7">
    <location>
        <begin position="434"/>
        <end position="473"/>
    </location>
</feature>
<feature type="region of interest" description="Disordered" evidence="1">
    <location>
        <begin position="1"/>
        <end position="29"/>
    </location>
</feature>
<feature type="region of interest" description="Disordered" evidence="1">
    <location>
        <begin position="74"/>
        <end position="93"/>
    </location>
</feature>
<feature type="compositionally biased region" description="Low complexity" evidence="1">
    <location>
        <begin position="7"/>
        <end position="17"/>
    </location>
</feature>
<feature type="mutagenesis site" description="Abrogates binding to mad2 and overrides activation of the spindle checkpoint by mad2." evidence="5">
    <original>AF</original>
    <variation>PY</variation>
    <location>
        <begin position="131"/>
        <end position="132"/>
    </location>
</feature>
<feature type="strand" evidence="7">
    <location>
        <begin position="127"/>
        <end position="132"/>
    </location>
</feature>
<feature type="strand" evidence="7">
    <location>
        <begin position="169"/>
        <end position="173"/>
    </location>
</feature>
<feature type="strand" evidence="7">
    <location>
        <begin position="186"/>
        <end position="188"/>
    </location>
</feature>
<feature type="strand" evidence="7">
    <location>
        <begin position="192"/>
        <end position="198"/>
    </location>
</feature>
<feature type="strand" evidence="7">
    <location>
        <begin position="201"/>
        <end position="206"/>
    </location>
</feature>
<feature type="turn" evidence="7">
    <location>
        <begin position="207"/>
        <end position="209"/>
    </location>
</feature>
<feature type="strand" evidence="7">
    <location>
        <begin position="212"/>
        <end position="217"/>
    </location>
</feature>
<feature type="strand" evidence="7">
    <location>
        <begin position="224"/>
        <end position="229"/>
    </location>
</feature>
<feature type="strand" evidence="7">
    <location>
        <begin position="233"/>
        <end position="240"/>
    </location>
</feature>
<feature type="strand" evidence="7">
    <location>
        <begin position="245"/>
        <end position="249"/>
    </location>
</feature>
<feature type="turn" evidence="7">
    <location>
        <begin position="250"/>
        <end position="252"/>
    </location>
</feature>
<feature type="strand" evidence="7">
    <location>
        <begin position="255"/>
        <end position="259"/>
    </location>
</feature>
<feature type="strand" evidence="7">
    <location>
        <begin position="266"/>
        <end position="272"/>
    </location>
</feature>
<feature type="strand" evidence="7">
    <location>
        <begin position="275"/>
        <end position="280"/>
    </location>
</feature>
<feature type="strand" evidence="7">
    <location>
        <begin position="283"/>
        <end position="289"/>
    </location>
</feature>
<feature type="strand" evidence="7">
    <location>
        <begin position="292"/>
        <end position="294"/>
    </location>
</feature>
<feature type="strand" evidence="7">
    <location>
        <begin position="296"/>
        <end position="301"/>
    </location>
</feature>
<feature type="strand" evidence="7">
    <location>
        <begin position="307"/>
        <end position="312"/>
    </location>
</feature>
<feature type="strand" evidence="7">
    <location>
        <begin position="316"/>
        <end position="323"/>
    </location>
</feature>
<feature type="strand" evidence="7">
    <location>
        <begin position="328"/>
        <end position="332"/>
    </location>
</feature>
<feature type="strand" evidence="7">
    <location>
        <begin position="336"/>
        <end position="342"/>
    </location>
</feature>
<feature type="strand" evidence="7">
    <location>
        <begin position="351"/>
        <end position="354"/>
    </location>
</feature>
<feature type="strand" evidence="7">
    <location>
        <begin position="361"/>
        <end position="365"/>
    </location>
</feature>
<feature type="turn" evidence="7">
    <location>
        <begin position="368"/>
        <end position="370"/>
    </location>
</feature>
<feature type="strand" evidence="7">
    <location>
        <begin position="372"/>
        <end position="377"/>
    </location>
</feature>
<feature type="turn" evidence="7">
    <location>
        <begin position="378"/>
        <end position="380"/>
    </location>
</feature>
<feature type="strand" evidence="7">
    <location>
        <begin position="383"/>
        <end position="388"/>
    </location>
</feature>
<feature type="strand" evidence="7">
    <location>
        <begin position="393"/>
        <end position="398"/>
    </location>
</feature>
<feature type="strand" evidence="7">
    <location>
        <begin position="400"/>
        <end position="409"/>
    </location>
</feature>
<feature type="turn" evidence="7">
    <location>
        <begin position="411"/>
        <end position="413"/>
    </location>
</feature>
<feature type="strand" evidence="7">
    <location>
        <begin position="415"/>
        <end position="422"/>
    </location>
</feature>
<feature type="strand" evidence="7">
    <location>
        <begin position="425"/>
        <end position="433"/>
    </location>
</feature>
<feature type="strand" evidence="7">
    <location>
        <begin position="441"/>
        <end position="444"/>
    </location>
</feature>
<feature type="strand" evidence="7">
    <location>
        <begin position="448"/>
        <end position="454"/>
    </location>
</feature>
<feature type="strand" evidence="7">
    <location>
        <begin position="458"/>
        <end position="464"/>
    </location>
</feature>
<protein>
    <recommendedName>
        <fullName>WD repeat-containing protein slp1</fullName>
    </recommendedName>
</protein>
<reference key="1">
    <citation type="journal article" date="1997" name="Mol. Cell. Biol.">
        <title>A fission yeast homolog of CDC20/p55CDC/Fizzy is required for recovery from DNA damage and genetically interacts with p34cdc2.</title>
        <authorList>
            <person name="Matsumoto T."/>
        </authorList>
    </citation>
    <scope>NUCLEOTIDE SEQUENCE [GENOMIC DNA]</scope>
    <scope>FUNCTION</scope>
    <source>
        <strain>972 / ATCC 24843</strain>
    </source>
</reference>
<reference key="2">
    <citation type="journal article" date="2002" name="Nature">
        <title>The genome sequence of Schizosaccharomyces pombe.</title>
        <authorList>
            <person name="Wood V."/>
            <person name="Gwilliam R."/>
            <person name="Rajandream M.A."/>
            <person name="Lyne M.H."/>
            <person name="Lyne R."/>
            <person name="Stewart A."/>
            <person name="Sgouros J.G."/>
            <person name="Peat N."/>
            <person name="Hayles J."/>
            <person name="Baker S.G."/>
            <person name="Basham D."/>
            <person name="Bowman S."/>
            <person name="Brooks K."/>
            <person name="Brown D."/>
            <person name="Brown S."/>
            <person name="Chillingworth T."/>
            <person name="Churcher C.M."/>
            <person name="Collins M."/>
            <person name="Connor R."/>
            <person name="Cronin A."/>
            <person name="Davis P."/>
            <person name="Feltwell T."/>
            <person name="Fraser A."/>
            <person name="Gentles S."/>
            <person name="Goble A."/>
            <person name="Hamlin N."/>
            <person name="Harris D.E."/>
            <person name="Hidalgo J."/>
            <person name="Hodgson G."/>
            <person name="Holroyd S."/>
            <person name="Hornsby T."/>
            <person name="Howarth S."/>
            <person name="Huckle E.J."/>
            <person name="Hunt S."/>
            <person name="Jagels K."/>
            <person name="James K.D."/>
            <person name="Jones L."/>
            <person name="Jones M."/>
            <person name="Leather S."/>
            <person name="McDonald S."/>
            <person name="McLean J."/>
            <person name="Mooney P."/>
            <person name="Moule S."/>
            <person name="Mungall K.L."/>
            <person name="Murphy L.D."/>
            <person name="Niblett D."/>
            <person name="Odell C."/>
            <person name="Oliver K."/>
            <person name="O'Neil S."/>
            <person name="Pearson D."/>
            <person name="Quail M.A."/>
            <person name="Rabbinowitsch E."/>
            <person name="Rutherford K.M."/>
            <person name="Rutter S."/>
            <person name="Saunders D."/>
            <person name="Seeger K."/>
            <person name="Sharp S."/>
            <person name="Skelton J."/>
            <person name="Simmonds M.N."/>
            <person name="Squares R."/>
            <person name="Squares S."/>
            <person name="Stevens K."/>
            <person name="Taylor K."/>
            <person name="Taylor R.G."/>
            <person name="Tivey A."/>
            <person name="Walsh S.V."/>
            <person name="Warren T."/>
            <person name="Whitehead S."/>
            <person name="Woodward J.R."/>
            <person name="Volckaert G."/>
            <person name="Aert R."/>
            <person name="Robben J."/>
            <person name="Grymonprez B."/>
            <person name="Weltjens I."/>
            <person name="Vanstreels E."/>
            <person name="Rieger M."/>
            <person name="Schaefer M."/>
            <person name="Mueller-Auer S."/>
            <person name="Gabel C."/>
            <person name="Fuchs M."/>
            <person name="Duesterhoeft A."/>
            <person name="Fritzc C."/>
            <person name="Holzer E."/>
            <person name="Moestl D."/>
            <person name="Hilbert H."/>
            <person name="Borzym K."/>
            <person name="Langer I."/>
            <person name="Beck A."/>
            <person name="Lehrach H."/>
            <person name="Reinhardt R."/>
            <person name="Pohl T.M."/>
            <person name="Eger P."/>
            <person name="Zimmermann W."/>
            <person name="Wedler H."/>
            <person name="Wambutt R."/>
            <person name="Purnelle B."/>
            <person name="Goffeau A."/>
            <person name="Cadieu E."/>
            <person name="Dreano S."/>
            <person name="Gloux S."/>
            <person name="Lelaure V."/>
            <person name="Mottier S."/>
            <person name="Galibert F."/>
            <person name="Aves S.J."/>
            <person name="Xiang Z."/>
            <person name="Hunt C."/>
            <person name="Moore K."/>
            <person name="Hurst S.M."/>
            <person name="Lucas M."/>
            <person name="Rochet M."/>
            <person name="Gaillardin C."/>
            <person name="Tallada V.A."/>
            <person name="Garzon A."/>
            <person name="Thode G."/>
            <person name="Daga R.R."/>
            <person name="Cruzado L."/>
            <person name="Jimenez J."/>
            <person name="Sanchez M."/>
            <person name="del Rey F."/>
            <person name="Benito J."/>
            <person name="Dominguez A."/>
            <person name="Revuelta J.L."/>
            <person name="Moreno S."/>
            <person name="Armstrong J."/>
            <person name="Forsburg S.L."/>
            <person name="Cerutti L."/>
            <person name="Lowe T."/>
            <person name="McCombie W.R."/>
            <person name="Paulsen I."/>
            <person name="Potashkin J."/>
            <person name="Shpakovski G.V."/>
            <person name="Ussery D."/>
            <person name="Barrell B.G."/>
            <person name="Nurse P."/>
        </authorList>
    </citation>
    <scope>NUCLEOTIDE SEQUENCE [LARGE SCALE GENOMIC DNA]</scope>
    <source>
        <strain>972 / ATCC 24843</strain>
    </source>
</reference>
<reference key="3">
    <citation type="journal article" date="1998" name="Science">
        <title>Fission yeast Slp1: an effector of the Mad2-dependent spindle checkpoint.</title>
        <authorList>
            <person name="Kim S.H."/>
            <person name="Lin D.P."/>
            <person name="Matsumoto S."/>
            <person name="Kitazono A."/>
            <person name="Matsumoto T."/>
        </authorList>
    </citation>
    <scope>FUNCTION</scope>
    <scope>MUTAGENESIS OF 131-ALA-PHE-132</scope>
</reference>
<reference key="4">
    <citation type="journal article" date="2002" name="Mol. Cell. Biol.">
        <title>Fission yeast Mad3p is required for Mad2p to inhibit the anaphase-promoting complex and localizes to kinetochores in a Bub1p-, Bub3p-, and Mph1p-dependent manner.</title>
        <authorList>
            <person name="Millband D.N."/>
            <person name="Hardwick K.G."/>
        </authorList>
    </citation>
    <scope>INTERACTION WITH MAD3</scope>
</reference>
<reference key="5">
    <citation type="journal article" date="2005" name="Nature">
        <title>Fission yeast Mes1p ensures the onset of meiosis II by blocking degradation of cyclin Cdc13p.</title>
        <authorList>
            <person name="Izawa D."/>
            <person name="Goto M."/>
            <person name="Yamashita A."/>
            <person name="Yamano H."/>
            <person name="Yamamoto M."/>
        </authorList>
    </citation>
    <scope>FUNCTION</scope>
    <scope>INTERACTION WITH MES1 AND CDC13</scope>
</reference>
<name>SLP1_SCHPO</name>
<gene>
    <name type="primary">slp1</name>
    <name type="ORF">SPAC821.08c</name>
</gene>